<reference key="1">
    <citation type="journal article" date="1987" name="Cell">
        <title>KAR1, a gene required for function of both intranuclear and extranuclear microtubules in yeast.</title>
        <authorList>
            <person name="Rose M.D."/>
            <person name="Fink G.R."/>
        </authorList>
    </citation>
    <scope>NUCLEOTIDE SEQUENCE [GENOMIC DNA]</scope>
</reference>
<reference key="2">
    <citation type="journal article" date="1997" name="Nature">
        <title>The nucleotide sequence of Saccharomyces cerevisiae chromosome XIV and its evolutionary implications.</title>
        <authorList>
            <person name="Philippsen P."/>
            <person name="Kleine K."/>
            <person name="Poehlmann R."/>
            <person name="Duesterhoeft A."/>
            <person name="Hamberg K."/>
            <person name="Hegemann J.H."/>
            <person name="Obermaier B."/>
            <person name="Urrestarazu L.A."/>
            <person name="Aert R."/>
            <person name="Albermann K."/>
            <person name="Altmann R."/>
            <person name="Andre B."/>
            <person name="Baladron V."/>
            <person name="Ballesta J.P.G."/>
            <person name="Becam A.-M."/>
            <person name="Beinhauer J.D."/>
            <person name="Boskovic J."/>
            <person name="Buitrago M.J."/>
            <person name="Bussereau F."/>
            <person name="Coster F."/>
            <person name="Crouzet M."/>
            <person name="D'Angelo M."/>
            <person name="Dal Pero F."/>
            <person name="De Antoni A."/>
            <person name="del Rey F."/>
            <person name="Doignon F."/>
            <person name="Domdey H."/>
            <person name="Dubois E."/>
            <person name="Fiedler T.A."/>
            <person name="Fleig U."/>
            <person name="Floeth M."/>
            <person name="Fritz C."/>
            <person name="Gaillardin C."/>
            <person name="Garcia-Cantalejo J.M."/>
            <person name="Glansdorff N."/>
            <person name="Goffeau A."/>
            <person name="Gueldener U."/>
            <person name="Herbert C.J."/>
            <person name="Heumann K."/>
            <person name="Heuss-Neitzel D."/>
            <person name="Hilbert H."/>
            <person name="Hinni K."/>
            <person name="Iraqui Houssaini I."/>
            <person name="Jacquet M."/>
            <person name="Jimenez A."/>
            <person name="Jonniaux J.-L."/>
            <person name="Karpfinger-Hartl L."/>
            <person name="Lanfranchi G."/>
            <person name="Lepingle A."/>
            <person name="Levesque H."/>
            <person name="Lyck R."/>
            <person name="Maftahi M."/>
            <person name="Mallet L."/>
            <person name="Maurer C.T.C."/>
            <person name="Messenguy F."/>
            <person name="Mewes H.-W."/>
            <person name="Moestl D."/>
            <person name="Nasr F."/>
            <person name="Nicaud J.-M."/>
            <person name="Niedenthal R.K."/>
            <person name="Pandolfo D."/>
            <person name="Pierard A."/>
            <person name="Piravandi E."/>
            <person name="Planta R.J."/>
            <person name="Pohl T.M."/>
            <person name="Purnelle B."/>
            <person name="Rebischung C."/>
            <person name="Remacha M.A."/>
            <person name="Revuelta J.L."/>
            <person name="Rinke M."/>
            <person name="Saiz J.E."/>
            <person name="Sartorello F."/>
            <person name="Scherens B."/>
            <person name="Sen-Gupta M."/>
            <person name="Soler-Mira A."/>
            <person name="Urbanus J.H.M."/>
            <person name="Valle G."/>
            <person name="Van Dyck L."/>
            <person name="Verhasselt P."/>
            <person name="Vierendeels F."/>
            <person name="Vissers S."/>
            <person name="Voet M."/>
            <person name="Volckaert G."/>
            <person name="Wach A."/>
            <person name="Wambutt R."/>
            <person name="Wedler H."/>
            <person name="Zollner A."/>
            <person name="Hani J."/>
        </authorList>
    </citation>
    <scope>NUCLEOTIDE SEQUENCE [LARGE SCALE GENOMIC DNA]</scope>
    <source>
        <strain>ATCC 204508 / S288c</strain>
    </source>
</reference>
<reference key="3">
    <citation type="journal article" date="2014" name="G3 (Bethesda)">
        <title>The reference genome sequence of Saccharomyces cerevisiae: Then and now.</title>
        <authorList>
            <person name="Engel S.R."/>
            <person name="Dietrich F.S."/>
            <person name="Fisk D.G."/>
            <person name="Binkley G."/>
            <person name="Balakrishnan R."/>
            <person name="Costanzo M.C."/>
            <person name="Dwight S.S."/>
            <person name="Hitz B.C."/>
            <person name="Karra K."/>
            <person name="Nash R.S."/>
            <person name="Weng S."/>
            <person name="Wong E.D."/>
            <person name="Lloyd P."/>
            <person name="Skrzypek M.S."/>
            <person name="Miyasato S.R."/>
            <person name="Simison M."/>
            <person name="Cherry J.M."/>
        </authorList>
    </citation>
    <scope>GENOME REANNOTATION</scope>
    <source>
        <strain>ATCC 204508 / S288c</strain>
    </source>
</reference>
<reference key="4">
    <citation type="journal article" date="2007" name="Genome Res.">
        <title>Approaching a complete repository of sequence-verified protein-encoding clones for Saccharomyces cerevisiae.</title>
        <authorList>
            <person name="Hu Y."/>
            <person name="Rolfs A."/>
            <person name="Bhullar B."/>
            <person name="Murthy T.V.S."/>
            <person name="Zhu C."/>
            <person name="Berger M.F."/>
            <person name="Camargo A.A."/>
            <person name="Kelley F."/>
            <person name="McCarron S."/>
            <person name="Jepson D."/>
            <person name="Richardson A."/>
            <person name="Raphael J."/>
            <person name="Moreira D."/>
            <person name="Taycher E."/>
            <person name="Zuo D."/>
            <person name="Mohr S."/>
            <person name="Kane M.F."/>
            <person name="Williamson J."/>
            <person name="Simpson A.J.G."/>
            <person name="Bulyk M.L."/>
            <person name="Harlow E."/>
            <person name="Marsischky G."/>
            <person name="Kolodner R.D."/>
            <person name="LaBaer J."/>
        </authorList>
    </citation>
    <scope>NUCLEOTIDE SEQUENCE [GENOMIC DNA]</scope>
    <source>
        <strain>ATCC 204508 / S288c</strain>
    </source>
</reference>
<reference key="5">
    <citation type="journal article" date="1994" name="Genetics">
        <title>Genetic interactions between CDC31 and KAR1, two genes required for duplication of the microtubule organizing center in Saccharomyces cerevisiae.</title>
        <authorList>
            <person name="Vallen E.A."/>
            <person name="Ho W."/>
            <person name="Winey M."/>
            <person name="Rose M.D."/>
        </authorList>
    </citation>
    <scope>FUNCTION</scope>
</reference>
<reference key="6">
    <citation type="journal article" date="1995" name="J. Cell Biol.">
        <title>The Cdc31p-binding protein Kar1p is a component of the half bridge of the yeast spindle pole body.</title>
        <authorList>
            <person name="Spang A."/>
            <person name="Courtney I."/>
            <person name="Grein K."/>
            <person name="Matzner M."/>
            <person name="Schiebel E."/>
        </authorList>
    </citation>
    <scope>FUNCTION</scope>
    <source>
        <strain>ATCC 204508 / S288c</strain>
    </source>
</reference>
<reference key="7">
    <citation type="journal article" date="1999" name="EMBO J.">
        <title>Interaction of the yeast gamma-tubulin complex-binding protein Spc72p with Kar1p is essential for microtubule function during karyogamy.</title>
        <authorList>
            <person name="Pereira G."/>
            <person name="Grueneberg U."/>
            <person name="Knop M."/>
            <person name="Schiebel E."/>
        </authorList>
    </citation>
    <scope>FUNCTION</scope>
    <scope>INTERACTION WITH SPC72</scope>
</reference>
<reference key="8">
    <citation type="journal article" date="2009" name="Science">
        <title>Global analysis of Cdk1 substrate phosphorylation sites provides insights into evolution.</title>
        <authorList>
            <person name="Holt L.J."/>
            <person name="Tuch B.B."/>
            <person name="Villen J."/>
            <person name="Johnson A.D."/>
            <person name="Gygi S.P."/>
            <person name="Morgan D.O."/>
        </authorList>
    </citation>
    <scope>PHOSPHORYLATION [LARGE SCALE ANALYSIS] AT THR-233</scope>
    <scope>IDENTIFICATION BY MASS SPECTROMETRY [LARGE SCALE ANALYSIS]</scope>
</reference>
<organism>
    <name type="scientific">Saccharomyces cerevisiae (strain ATCC 204508 / S288c)</name>
    <name type="common">Baker's yeast</name>
    <dbReference type="NCBI Taxonomy" id="559292"/>
    <lineage>
        <taxon>Eukaryota</taxon>
        <taxon>Fungi</taxon>
        <taxon>Dikarya</taxon>
        <taxon>Ascomycota</taxon>
        <taxon>Saccharomycotina</taxon>
        <taxon>Saccharomycetes</taxon>
        <taxon>Saccharomycetales</taxon>
        <taxon>Saccharomycetaceae</taxon>
        <taxon>Saccharomyces</taxon>
    </lineage>
</organism>
<comment type="function">
    <text evidence="2 3 4">KAR1 is required for function of both intranuclear and extranuclear microtubules. KAR1 helps localize CDC31 to the spindle pole body (SPB), CDC31 then initiates SPB duplication via interaction with a downstream effector.</text>
</comment>
<comment type="subunit">
    <text evidence="2">Interacts with SPC72.</text>
</comment>
<comment type="subcellular location">
    <subcellularLocation>
        <location>Cytoplasm</location>
        <location>Cytoskeleton</location>
        <location>Microtubule organizing center</location>
        <location>Spindle pole body</location>
    </subcellularLocation>
</comment>
<feature type="chain" id="PRO_0000084295" description="Cell division control protein KAR1">
    <location>
        <begin position="1"/>
        <end position="433"/>
    </location>
</feature>
<feature type="region of interest" description="Disordered" evidence="1">
    <location>
        <begin position="1"/>
        <end position="38"/>
    </location>
</feature>
<feature type="region of interest" description="Disordered" evidence="1">
    <location>
        <begin position="69"/>
        <end position="101"/>
    </location>
</feature>
<feature type="region of interest" description="Disordered" evidence="1">
    <location>
        <begin position="207"/>
        <end position="227"/>
    </location>
</feature>
<feature type="modified residue" description="Phosphothreonine" evidence="6">
    <location>
        <position position="233"/>
    </location>
</feature>
<feature type="sequence conflict" description="In Ref. 4; AAT92901." evidence="5" ref="4">
    <original>Y</original>
    <variation>H</variation>
    <location>
        <position position="95"/>
    </location>
</feature>
<feature type="sequence conflict" description="In Ref. 1; AAA34716." evidence="5" ref="1">
    <original>A</original>
    <variation>V</variation>
    <location>
        <position position="199"/>
    </location>
</feature>
<feature type="helix" evidence="7">
    <location>
        <begin position="240"/>
        <end position="252"/>
    </location>
</feature>
<dbReference type="EMBL" id="M15683">
    <property type="protein sequence ID" value="AAA34716.1"/>
    <property type="molecule type" value="Genomic_DNA"/>
</dbReference>
<dbReference type="EMBL" id="Z71464">
    <property type="protein sequence ID" value="CAA96082.1"/>
    <property type="molecule type" value="Genomic_DNA"/>
</dbReference>
<dbReference type="EMBL" id="AY692882">
    <property type="protein sequence ID" value="AAT92901.1"/>
    <property type="molecule type" value="Genomic_DNA"/>
</dbReference>
<dbReference type="EMBL" id="BK006947">
    <property type="protein sequence ID" value="DAA10365.1"/>
    <property type="molecule type" value="Genomic_DNA"/>
</dbReference>
<dbReference type="PIR" id="S63143">
    <property type="entry name" value="S63143"/>
</dbReference>
<dbReference type="RefSeq" id="NP_014211.1">
    <property type="nucleotide sequence ID" value="NM_001183026.1"/>
</dbReference>
<dbReference type="PDB" id="1OQP">
    <property type="method" value="NMR"/>
    <property type="chains" value="B=239-257"/>
</dbReference>
<dbReference type="PDBsum" id="1OQP"/>
<dbReference type="BMRB" id="P11927"/>
<dbReference type="SMR" id="P11927"/>
<dbReference type="BioGRID" id="35645">
    <property type="interactions" value="32"/>
</dbReference>
<dbReference type="DIP" id="DIP-2274N"/>
<dbReference type="FunCoup" id="P11927">
    <property type="interactions" value="143"/>
</dbReference>
<dbReference type="IntAct" id="P11927">
    <property type="interactions" value="6"/>
</dbReference>
<dbReference type="STRING" id="4932.YNL188W"/>
<dbReference type="iPTMnet" id="P11927"/>
<dbReference type="PaxDb" id="4932-YNL188W"/>
<dbReference type="PeptideAtlas" id="P11927"/>
<dbReference type="EnsemblFungi" id="YNL188W_mRNA">
    <property type="protein sequence ID" value="YNL188W"/>
    <property type="gene ID" value="YNL188W"/>
</dbReference>
<dbReference type="GeneID" id="855533"/>
<dbReference type="KEGG" id="sce:YNL188W"/>
<dbReference type="AGR" id="SGD:S000005132"/>
<dbReference type="SGD" id="S000005132">
    <property type="gene designation" value="KAR1"/>
</dbReference>
<dbReference type="VEuPathDB" id="FungiDB:YNL188W"/>
<dbReference type="eggNOG" id="ENOG502S30N">
    <property type="taxonomic scope" value="Eukaryota"/>
</dbReference>
<dbReference type="HOGENOM" id="CLU_051895_0_0_1"/>
<dbReference type="InParanoid" id="P11927"/>
<dbReference type="OMA" id="LIESKWH"/>
<dbReference type="OrthoDB" id="4053921at2759"/>
<dbReference type="BioCyc" id="YEAST:G3O-33199-MONOMER"/>
<dbReference type="BioGRID-ORCS" id="855533">
    <property type="hits" value="7 hits in 10 CRISPR screens"/>
</dbReference>
<dbReference type="CD-CODE" id="876000F7">
    <property type="entry name" value="Centrosome"/>
</dbReference>
<dbReference type="PRO" id="PR:P11927"/>
<dbReference type="Proteomes" id="UP000002311">
    <property type="component" value="Chromosome XIV"/>
</dbReference>
<dbReference type="RNAct" id="P11927">
    <property type="molecule type" value="protein"/>
</dbReference>
<dbReference type="GO" id="GO:0005783">
    <property type="term" value="C:endoplasmic reticulum"/>
    <property type="evidence" value="ECO:0007005"/>
    <property type="project" value="SGD"/>
</dbReference>
<dbReference type="GO" id="GO:0005825">
    <property type="term" value="C:half bridge of spindle pole body"/>
    <property type="evidence" value="ECO:0000314"/>
    <property type="project" value="SGD"/>
</dbReference>
<dbReference type="GO" id="GO:0005874">
    <property type="term" value="C:microtubule"/>
    <property type="evidence" value="ECO:0007669"/>
    <property type="project" value="UniProtKB-KW"/>
</dbReference>
<dbReference type="GO" id="GO:0051301">
    <property type="term" value="P:cell division"/>
    <property type="evidence" value="ECO:0007669"/>
    <property type="project" value="UniProtKB-KW"/>
</dbReference>
<dbReference type="GO" id="GO:0000742">
    <property type="term" value="P:karyogamy involved in conjugation with cellular fusion"/>
    <property type="evidence" value="ECO:0000315"/>
    <property type="project" value="SGD"/>
</dbReference>
<dbReference type="GO" id="GO:0030474">
    <property type="term" value="P:spindle pole body duplication"/>
    <property type="evidence" value="ECO:0000315"/>
    <property type="project" value="SGD"/>
</dbReference>
<dbReference type="IDEAL" id="IID50070"/>
<name>KAR1_YEAST</name>
<evidence type="ECO:0000256" key="1">
    <source>
        <dbReference type="SAM" id="MobiDB-lite"/>
    </source>
</evidence>
<evidence type="ECO:0000269" key="2">
    <source>
    </source>
</evidence>
<evidence type="ECO:0000269" key="3">
    <source>
    </source>
</evidence>
<evidence type="ECO:0000269" key="4">
    <source>
    </source>
</evidence>
<evidence type="ECO:0000305" key="5"/>
<evidence type="ECO:0007744" key="6">
    <source>
    </source>
</evidence>
<evidence type="ECO:0007829" key="7">
    <source>
        <dbReference type="PDB" id="1OQP"/>
    </source>
</evidence>
<keyword id="KW-0002">3D-structure</keyword>
<keyword id="KW-0131">Cell cycle</keyword>
<keyword id="KW-0132">Cell division</keyword>
<keyword id="KW-0963">Cytoplasm</keyword>
<keyword id="KW-0206">Cytoskeleton</keyword>
<keyword id="KW-0493">Microtubule</keyword>
<keyword id="KW-0498">Mitosis</keyword>
<keyword id="KW-0597">Phosphoprotein</keyword>
<keyword id="KW-1185">Reference proteome</keyword>
<gene>
    <name type="primary">KAR1</name>
    <name type="ordered locus">YNL188W</name>
    <name type="ORF">N1611</name>
</gene>
<proteinExistence type="evidence at protein level"/>
<accession>P11927</accession>
<accession>D6W0Z9</accession>
<accession>E9P8Y4</accession>
<protein>
    <recommendedName>
        <fullName>Cell division control protein KAR1</fullName>
    </recommendedName>
</protein>
<sequence length="433" mass="50653">MNVTSPKDGNHSFSKKNRFNTNKPRFHKLNEQAQSINLPEDRDSIVSSNTTSIMTDDAFDYNEGIASRTKNINSDSDRSNDTIKQNNYNKRETGYNPFYNGSGINQRYTQFRKREFEPTLAENKAEEYISDEDNVKIDEDNIENELQFTPKIKEASILRSSLLGQRNVLNTRNPKSKESHIKVKPIINNKSSSQRKSSAALRKQLGKPLPLPYLNSPNSDSTPTLQRKEEVFTDEVLQKKRELIESKWHRLLFHDKKMVEKKLESLREYERKRMPPRGTDVSSSEQDNSFKISTPTKSYVSLEQKPLPNLSAMNNFNDVTDNKEKEETNNNILKFQAQRDPLQILQSEIEMHTKKLDTIIELLKDDTDSKEKRKVVTNDNAAPEQMVNKGWRKNVMMIYKKSGNIMKKYREYFLWTICILILLYCNIYVYYRF</sequence>